<comment type="function">
    <text evidence="1">Peptidoglycan polymerase that catalyzes glycan chain elongation from lipid-linked precursors.</text>
</comment>
<comment type="catalytic activity">
    <reaction evidence="1">
        <text>[GlcNAc-(1-&gt;4)-Mur2Ac(oyl-L-Ala-gamma-D-Glu-L-Lys-D-Ala-D-Ala)](n)-di-trans,octa-cis-undecaprenyl diphosphate + beta-D-GlcNAc-(1-&gt;4)-Mur2Ac(oyl-L-Ala-gamma-D-Glu-L-Lys-D-Ala-D-Ala)-di-trans,octa-cis-undecaprenyl diphosphate = [GlcNAc-(1-&gt;4)-Mur2Ac(oyl-L-Ala-gamma-D-Glu-L-Lys-D-Ala-D-Ala)](n+1)-di-trans,octa-cis-undecaprenyl diphosphate + di-trans,octa-cis-undecaprenyl diphosphate + H(+)</text>
        <dbReference type="Rhea" id="RHEA:23708"/>
        <dbReference type="Rhea" id="RHEA-COMP:9602"/>
        <dbReference type="Rhea" id="RHEA-COMP:9603"/>
        <dbReference type="ChEBI" id="CHEBI:15378"/>
        <dbReference type="ChEBI" id="CHEBI:58405"/>
        <dbReference type="ChEBI" id="CHEBI:60033"/>
        <dbReference type="ChEBI" id="CHEBI:78435"/>
        <dbReference type="EC" id="2.4.99.28"/>
    </reaction>
</comment>
<comment type="pathway">
    <text evidence="1">Cell wall biogenesis; peptidoglycan biosynthesis.</text>
</comment>
<comment type="subcellular location">
    <subcellularLocation>
        <location evidence="1">Cell inner membrane</location>
        <topology evidence="1">Single-pass membrane protein</topology>
    </subcellularLocation>
</comment>
<comment type="similarity">
    <text evidence="1">Belongs to the glycosyltransferase 51 family.</text>
</comment>
<dbReference type="EC" id="2.4.99.28" evidence="1"/>
<dbReference type="EMBL" id="CP000250">
    <property type="protein sequence ID" value="ABD05226.1"/>
    <property type="molecule type" value="Genomic_DNA"/>
</dbReference>
<dbReference type="RefSeq" id="WP_011439416.1">
    <property type="nucleotide sequence ID" value="NC_007778.1"/>
</dbReference>
<dbReference type="SMR" id="Q2J2T4"/>
<dbReference type="STRING" id="316058.RPB_0515"/>
<dbReference type="CAZy" id="GT51">
    <property type="family name" value="Glycosyltransferase Family 51"/>
</dbReference>
<dbReference type="KEGG" id="rpb:RPB_0515"/>
<dbReference type="eggNOG" id="COG0744">
    <property type="taxonomic scope" value="Bacteria"/>
</dbReference>
<dbReference type="HOGENOM" id="CLU_006354_1_1_5"/>
<dbReference type="OrthoDB" id="9766909at2"/>
<dbReference type="UniPathway" id="UPA00219"/>
<dbReference type="Proteomes" id="UP000008809">
    <property type="component" value="Chromosome"/>
</dbReference>
<dbReference type="GO" id="GO:0009274">
    <property type="term" value="C:peptidoglycan-based cell wall"/>
    <property type="evidence" value="ECO:0007669"/>
    <property type="project" value="InterPro"/>
</dbReference>
<dbReference type="GO" id="GO:0005886">
    <property type="term" value="C:plasma membrane"/>
    <property type="evidence" value="ECO:0007669"/>
    <property type="project" value="UniProtKB-SubCell"/>
</dbReference>
<dbReference type="GO" id="GO:0016763">
    <property type="term" value="F:pentosyltransferase activity"/>
    <property type="evidence" value="ECO:0007669"/>
    <property type="project" value="InterPro"/>
</dbReference>
<dbReference type="GO" id="GO:0008955">
    <property type="term" value="F:peptidoglycan glycosyltransferase activity"/>
    <property type="evidence" value="ECO:0007669"/>
    <property type="project" value="UniProtKB-UniRule"/>
</dbReference>
<dbReference type="GO" id="GO:0071555">
    <property type="term" value="P:cell wall organization"/>
    <property type="evidence" value="ECO:0007669"/>
    <property type="project" value="UniProtKB-KW"/>
</dbReference>
<dbReference type="GO" id="GO:0009252">
    <property type="term" value="P:peptidoglycan biosynthetic process"/>
    <property type="evidence" value="ECO:0007669"/>
    <property type="project" value="UniProtKB-UniRule"/>
</dbReference>
<dbReference type="GO" id="GO:0008360">
    <property type="term" value="P:regulation of cell shape"/>
    <property type="evidence" value="ECO:0007669"/>
    <property type="project" value="UniProtKB-KW"/>
</dbReference>
<dbReference type="Gene3D" id="1.10.3810.10">
    <property type="entry name" value="Biosynthetic peptidoglycan transglycosylase-like"/>
    <property type="match status" value="1"/>
</dbReference>
<dbReference type="HAMAP" id="MF_00766">
    <property type="entry name" value="PGT_MtgA"/>
    <property type="match status" value="1"/>
</dbReference>
<dbReference type="InterPro" id="IPR001264">
    <property type="entry name" value="Glyco_trans_51"/>
</dbReference>
<dbReference type="InterPro" id="IPR023346">
    <property type="entry name" value="Lysozyme-like_dom_sf"/>
</dbReference>
<dbReference type="InterPro" id="IPR036950">
    <property type="entry name" value="PBP_transglycosylase"/>
</dbReference>
<dbReference type="InterPro" id="IPR011812">
    <property type="entry name" value="Pep_trsgly"/>
</dbReference>
<dbReference type="NCBIfam" id="TIGR02070">
    <property type="entry name" value="mono_pep_trsgly"/>
    <property type="match status" value="1"/>
</dbReference>
<dbReference type="PANTHER" id="PTHR30400:SF0">
    <property type="entry name" value="BIOSYNTHETIC PEPTIDOGLYCAN TRANSGLYCOSYLASE"/>
    <property type="match status" value="1"/>
</dbReference>
<dbReference type="PANTHER" id="PTHR30400">
    <property type="entry name" value="MONOFUNCTIONAL BIOSYNTHETIC PEPTIDOGLYCAN TRANSGLYCOSYLASE"/>
    <property type="match status" value="1"/>
</dbReference>
<dbReference type="Pfam" id="PF00912">
    <property type="entry name" value="Transgly"/>
    <property type="match status" value="1"/>
</dbReference>
<dbReference type="SUPFAM" id="SSF53955">
    <property type="entry name" value="Lysozyme-like"/>
    <property type="match status" value="1"/>
</dbReference>
<proteinExistence type="inferred from homology"/>
<organism>
    <name type="scientific">Rhodopseudomonas palustris (strain HaA2)</name>
    <dbReference type="NCBI Taxonomy" id="316058"/>
    <lineage>
        <taxon>Bacteria</taxon>
        <taxon>Pseudomonadati</taxon>
        <taxon>Pseudomonadota</taxon>
        <taxon>Alphaproteobacteria</taxon>
        <taxon>Hyphomicrobiales</taxon>
        <taxon>Nitrobacteraceae</taxon>
        <taxon>Rhodopseudomonas</taxon>
    </lineage>
</organism>
<evidence type="ECO:0000255" key="1">
    <source>
        <dbReference type="HAMAP-Rule" id="MF_00766"/>
    </source>
</evidence>
<gene>
    <name evidence="1" type="primary">mtgA</name>
    <name type="ordered locus">RPB_0515</name>
</gene>
<reference key="1">
    <citation type="submission" date="2006-01" db="EMBL/GenBank/DDBJ databases">
        <title>Complete sequence of Rhodopseudomonas palustris HaA2.</title>
        <authorList>
            <consortium name="US DOE Joint Genome Institute"/>
            <person name="Copeland A."/>
            <person name="Lucas S."/>
            <person name="Lapidus A."/>
            <person name="Barry K."/>
            <person name="Detter J.C."/>
            <person name="Glavina T."/>
            <person name="Hammon N."/>
            <person name="Israni S."/>
            <person name="Pitluck S."/>
            <person name="Chain P."/>
            <person name="Malfatti S."/>
            <person name="Shin M."/>
            <person name="Vergez L."/>
            <person name="Schmutz J."/>
            <person name="Larimer F."/>
            <person name="Land M."/>
            <person name="Hauser L."/>
            <person name="Pelletier D.A."/>
            <person name="Kyrpides N."/>
            <person name="Anderson I."/>
            <person name="Oda Y."/>
            <person name="Harwood C.S."/>
            <person name="Richardson P."/>
        </authorList>
    </citation>
    <scope>NUCLEOTIDE SEQUENCE [LARGE SCALE GENOMIC DNA]</scope>
    <source>
        <strain>HaA2</strain>
    </source>
</reference>
<feature type="chain" id="PRO_0000257688" description="Biosynthetic peptidoglycan transglycosylase">
    <location>
        <begin position="1"/>
        <end position="227"/>
    </location>
</feature>
<feature type="transmembrane region" description="Helical" evidence="1">
    <location>
        <begin position="7"/>
        <end position="27"/>
    </location>
</feature>
<protein>
    <recommendedName>
        <fullName evidence="1">Biosynthetic peptidoglycan transglycosylase</fullName>
        <ecNumber evidence="1">2.4.99.28</ecNumber>
    </recommendedName>
    <alternativeName>
        <fullName evidence="1">Glycan polymerase</fullName>
    </alternativeName>
    <alternativeName>
        <fullName evidence="1">Peptidoglycan glycosyltransferase MtgA</fullName>
        <shortName evidence="1">PGT</shortName>
    </alternativeName>
</protein>
<keyword id="KW-0997">Cell inner membrane</keyword>
<keyword id="KW-1003">Cell membrane</keyword>
<keyword id="KW-0133">Cell shape</keyword>
<keyword id="KW-0961">Cell wall biogenesis/degradation</keyword>
<keyword id="KW-0328">Glycosyltransferase</keyword>
<keyword id="KW-0472">Membrane</keyword>
<keyword id="KW-0573">Peptidoglycan synthesis</keyword>
<keyword id="KW-1185">Reference proteome</keyword>
<keyword id="KW-0808">Transferase</keyword>
<keyword id="KW-0812">Transmembrane</keyword>
<keyword id="KW-1133">Transmembrane helix</keyword>
<accession>Q2J2T4</accession>
<sequence>MRRLIRVALLTLLLLVAAPYVLTLVYGAGQPVSTLMVWRWLAGATVTRQWVDIERMAPALPRTVVASEDAKFCSHSGIDWDSVRDVLDDLQDGGEASRGGSTITQQVAKNLFLWPGRSVVRKALEFPLAMWIDLVLSKQRILELYLNIAEWGPDGQFGAEAGAAYAFGRSAAQLTPQEAALMASILPNPRVRSAKKPGPGVRRLAATYVARARSAELQQCWRENSGS</sequence>
<name>MTGA_RHOP2</name>